<gene>
    <name evidence="1" type="primary">mqo</name>
    <name type="ordered locus">EcolC_1440</name>
</gene>
<name>MQO_ECOLC</name>
<proteinExistence type="inferred from homology"/>
<evidence type="ECO:0000255" key="1">
    <source>
        <dbReference type="HAMAP-Rule" id="MF_00212"/>
    </source>
</evidence>
<evidence type="ECO:0000256" key="2">
    <source>
        <dbReference type="SAM" id="MobiDB-lite"/>
    </source>
</evidence>
<organism>
    <name type="scientific">Escherichia coli (strain ATCC 8739 / DSM 1576 / NBRC 3972 / NCIMB 8545 / WDCM 00012 / Crooks)</name>
    <dbReference type="NCBI Taxonomy" id="481805"/>
    <lineage>
        <taxon>Bacteria</taxon>
        <taxon>Pseudomonadati</taxon>
        <taxon>Pseudomonadota</taxon>
        <taxon>Gammaproteobacteria</taxon>
        <taxon>Enterobacterales</taxon>
        <taxon>Enterobacteriaceae</taxon>
        <taxon>Escherichia</taxon>
    </lineage>
</organism>
<keyword id="KW-0274">FAD</keyword>
<keyword id="KW-0285">Flavoprotein</keyword>
<keyword id="KW-0560">Oxidoreductase</keyword>
<keyword id="KW-0816">Tricarboxylic acid cycle</keyword>
<protein>
    <recommendedName>
        <fullName evidence="1">Probable malate:quinone oxidoreductase</fullName>
        <ecNumber evidence="1">1.1.5.4</ecNumber>
    </recommendedName>
    <alternativeName>
        <fullName evidence="1">MQO</fullName>
    </alternativeName>
    <alternativeName>
        <fullName evidence="1">Malate dehydrogenase [quinone]</fullName>
    </alternativeName>
</protein>
<accession>B1IY62</accession>
<reference key="1">
    <citation type="submission" date="2008-02" db="EMBL/GenBank/DDBJ databases">
        <title>Complete sequence of Escherichia coli C str. ATCC 8739.</title>
        <authorList>
            <person name="Copeland A."/>
            <person name="Lucas S."/>
            <person name="Lapidus A."/>
            <person name="Glavina del Rio T."/>
            <person name="Dalin E."/>
            <person name="Tice H."/>
            <person name="Bruce D."/>
            <person name="Goodwin L."/>
            <person name="Pitluck S."/>
            <person name="Kiss H."/>
            <person name="Brettin T."/>
            <person name="Detter J.C."/>
            <person name="Han C."/>
            <person name="Kuske C.R."/>
            <person name="Schmutz J."/>
            <person name="Larimer F."/>
            <person name="Land M."/>
            <person name="Hauser L."/>
            <person name="Kyrpides N."/>
            <person name="Mikhailova N."/>
            <person name="Ingram L."/>
            <person name="Richardson P."/>
        </authorList>
    </citation>
    <scope>NUCLEOTIDE SEQUENCE [LARGE SCALE GENOMIC DNA]</scope>
    <source>
        <strain>ATCC 8739 / DSM 1576 / NBRC 3972 / NCIMB 8545 / WDCM 00012 / Crooks</strain>
    </source>
</reference>
<sequence>MKKVTAMLFSMAVGLNAVSMAAKAKASEEQETDVLLIGGGIMSATLGTYLRELEPEWSMTMVERLEGVAQESSNGWNNAGTGHSALMELNYTPQNADGSISIEKAVAINEAFQISRQFWAHQVERGVLRTPRSFINTVPHMSFVWGEDNVNFLRARYAALQQSSLFRGMRYSEDHAQIKEWAPLVMEGRDPQQKVAATRTEIGTDVNYGEITRQLIASLQKKSNFSLQLSSEVRALKRNDDNTWTVTVADLKNGTAQNIRAKFVFIGAGGAALKLLQESGIPEAKDYAGFPVGGQFLVSENPDVVNHHLAKVYGKASVGAPPMSVPHIDTRVLDGKRVVLFGPFATFSTKFLKNGSLWDLMSSTTTSNVMPMMHVGLDNFDLVKYLVSQVMLSEEDRFEALKEYYPQAKKEDWRLWQAGQRVQIIKRDAEKGGVLRLGTEVVSDQQGTIAALLGASPGASTAAPIMLDLLEKVFGDRVSSPQWQATLKAIVPSYGRKLNGDVAATERELQYTSEVLGLKYDKPQAADSTPKPQLKPKPVQKEVADIAL</sequence>
<feature type="chain" id="PRO_1000078032" description="Probable malate:quinone oxidoreductase">
    <location>
        <begin position="1"/>
        <end position="548"/>
    </location>
</feature>
<feature type="region of interest" description="Disordered" evidence="2">
    <location>
        <begin position="521"/>
        <end position="548"/>
    </location>
</feature>
<feature type="compositionally biased region" description="Basic and acidic residues" evidence="2">
    <location>
        <begin position="539"/>
        <end position="548"/>
    </location>
</feature>
<comment type="catalytic activity">
    <reaction evidence="1">
        <text>(S)-malate + a quinone = a quinol + oxaloacetate</text>
        <dbReference type="Rhea" id="RHEA:46012"/>
        <dbReference type="ChEBI" id="CHEBI:15589"/>
        <dbReference type="ChEBI" id="CHEBI:16452"/>
        <dbReference type="ChEBI" id="CHEBI:24646"/>
        <dbReference type="ChEBI" id="CHEBI:132124"/>
        <dbReference type="EC" id="1.1.5.4"/>
    </reaction>
</comment>
<comment type="cofactor">
    <cofactor evidence="1">
        <name>FAD</name>
        <dbReference type="ChEBI" id="CHEBI:57692"/>
    </cofactor>
</comment>
<comment type="pathway">
    <text evidence="1">Carbohydrate metabolism; tricarboxylic acid cycle; oxaloacetate from (S)-malate (quinone route): step 1/1.</text>
</comment>
<comment type="similarity">
    <text evidence="1">Belongs to the MQO family.</text>
</comment>
<dbReference type="EC" id="1.1.5.4" evidence="1"/>
<dbReference type="EMBL" id="CP000946">
    <property type="protein sequence ID" value="ACA77103.1"/>
    <property type="molecule type" value="Genomic_DNA"/>
</dbReference>
<dbReference type="RefSeq" id="WP_000758073.1">
    <property type="nucleotide sequence ID" value="NZ_MTFT01000028.1"/>
</dbReference>
<dbReference type="SMR" id="B1IY62"/>
<dbReference type="KEGG" id="ecl:EcolC_1440"/>
<dbReference type="HOGENOM" id="CLU_028151_0_0_6"/>
<dbReference type="UniPathway" id="UPA00223">
    <property type="reaction ID" value="UER01008"/>
</dbReference>
<dbReference type="GO" id="GO:0047545">
    <property type="term" value="F:2-hydroxyglutarate dehydrogenase activity"/>
    <property type="evidence" value="ECO:0007669"/>
    <property type="project" value="TreeGrafter"/>
</dbReference>
<dbReference type="GO" id="GO:0008924">
    <property type="term" value="F:L-malate dehydrogenase (quinone) activity"/>
    <property type="evidence" value="ECO:0007669"/>
    <property type="project" value="UniProtKB-UniRule"/>
</dbReference>
<dbReference type="GO" id="GO:0006099">
    <property type="term" value="P:tricarboxylic acid cycle"/>
    <property type="evidence" value="ECO:0007669"/>
    <property type="project" value="UniProtKB-UniRule"/>
</dbReference>
<dbReference type="Gene3D" id="3.30.9.10">
    <property type="entry name" value="D-Amino Acid Oxidase, subunit A, domain 2"/>
    <property type="match status" value="1"/>
</dbReference>
<dbReference type="Gene3D" id="3.50.50.60">
    <property type="entry name" value="FAD/NAD(P)-binding domain"/>
    <property type="match status" value="1"/>
</dbReference>
<dbReference type="HAMAP" id="MF_00212">
    <property type="entry name" value="MQO"/>
    <property type="match status" value="1"/>
</dbReference>
<dbReference type="InterPro" id="IPR036188">
    <property type="entry name" value="FAD/NAD-bd_sf"/>
</dbReference>
<dbReference type="InterPro" id="IPR006231">
    <property type="entry name" value="MQO"/>
</dbReference>
<dbReference type="NCBIfam" id="TIGR01320">
    <property type="entry name" value="mal_quin_oxido"/>
    <property type="match status" value="1"/>
</dbReference>
<dbReference type="NCBIfam" id="NF003603">
    <property type="entry name" value="PRK05257.1-1"/>
    <property type="match status" value="1"/>
</dbReference>
<dbReference type="NCBIfam" id="NF003605">
    <property type="entry name" value="PRK05257.1-4"/>
    <property type="match status" value="1"/>
</dbReference>
<dbReference type="NCBIfam" id="NF003606">
    <property type="entry name" value="PRK05257.2-1"/>
    <property type="match status" value="1"/>
</dbReference>
<dbReference type="NCBIfam" id="NF003608">
    <property type="entry name" value="PRK05257.2-4"/>
    <property type="match status" value="1"/>
</dbReference>
<dbReference type="NCBIfam" id="NF003611">
    <property type="entry name" value="PRK05257.3-2"/>
    <property type="match status" value="1"/>
</dbReference>
<dbReference type="NCBIfam" id="NF009875">
    <property type="entry name" value="PRK13339.1"/>
    <property type="match status" value="1"/>
</dbReference>
<dbReference type="PANTHER" id="PTHR43104">
    <property type="entry name" value="L-2-HYDROXYGLUTARATE DEHYDROGENASE, MITOCHONDRIAL"/>
    <property type="match status" value="1"/>
</dbReference>
<dbReference type="PANTHER" id="PTHR43104:SF2">
    <property type="entry name" value="L-2-HYDROXYGLUTARATE DEHYDROGENASE, MITOCHONDRIAL"/>
    <property type="match status" value="1"/>
</dbReference>
<dbReference type="Pfam" id="PF06039">
    <property type="entry name" value="Mqo"/>
    <property type="match status" value="1"/>
</dbReference>
<dbReference type="SUPFAM" id="SSF51905">
    <property type="entry name" value="FAD/NAD(P)-binding domain"/>
    <property type="match status" value="1"/>
</dbReference>